<gene>
    <name evidence="1" type="primary">fabZ</name>
    <name type="ordered locus">BURPS668_2425</name>
</gene>
<reference key="1">
    <citation type="journal article" date="2010" name="Genome Biol. Evol.">
        <title>Continuing evolution of Burkholderia mallei through genome reduction and large-scale rearrangements.</title>
        <authorList>
            <person name="Losada L."/>
            <person name="Ronning C.M."/>
            <person name="DeShazer D."/>
            <person name="Woods D."/>
            <person name="Fedorova N."/>
            <person name="Kim H.S."/>
            <person name="Shabalina S.A."/>
            <person name="Pearson T.R."/>
            <person name="Brinkac L."/>
            <person name="Tan P."/>
            <person name="Nandi T."/>
            <person name="Crabtree J."/>
            <person name="Badger J."/>
            <person name="Beckstrom-Sternberg S."/>
            <person name="Saqib M."/>
            <person name="Schutzer S.E."/>
            <person name="Keim P."/>
            <person name="Nierman W.C."/>
        </authorList>
    </citation>
    <scope>NUCLEOTIDE SEQUENCE [LARGE SCALE GENOMIC DNA]</scope>
    <source>
        <strain>668</strain>
    </source>
</reference>
<keyword id="KW-0963">Cytoplasm</keyword>
<keyword id="KW-0441">Lipid A biosynthesis</keyword>
<keyword id="KW-0444">Lipid biosynthesis</keyword>
<keyword id="KW-0443">Lipid metabolism</keyword>
<keyword id="KW-0456">Lyase</keyword>
<name>FABZ_BURP6</name>
<protein>
    <recommendedName>
        <fullName evidence="1">3-hydroxyacyl-[acyl-carrier-protein] dehydratase FabZ</fullName>
        <ecNumber evidence="1">4.2.1.59</ecNumber>
    </recommendedName>
    <alternativeName>
        <fullName evidence="1">(3R)-hydroxymyristoyl-[acyl-carrier-protein] dehydratase</fullName>
        <shortName evidence="1">(3R)-hydroxymyristoyl-ACP dehydrase</shortName>
    </alternativeName>
    <alternativeName>
        <fullName evidence="1">Beta-hydroxyacyl-ACP dehydratase</fullName>
    </alternativeName>
</protein>
<comment type="function">
    <text evidence="1">Involved in unsaturated fatty acids biosynthesis. Catalyzes the dehydration of short chain beta-hydroxyacyl-ACPs and long chain saturated and unsaturated beta-hydroxyacyl-ACPs.</text>
</comment>
<comment type="catalytic activity">
    <reaction evidence="1">
        <text>a (3R)-hydroxyacyl-[ACP] = a (2E)-enoyl-[ACP] + H2O</text>
        <dbReference type="Rhea" id="RHEA:13097"/>
        <dbReference type="Rhea" id="RHEA-COMP:9925"/>
        <dbReference type="Rhea" id="RHEA-COMP:9945"/>
        <dbReference type="ChEBI" id="CHEBI:15377"/>
        <dbReference type="ChEBI" id="CHEBI:78784"/>
        <dbReference type="ChEBI" id="CHEBI:78827"/>
        <dbReference type="EC" id="4.2.1.59"/>
    </reaction>
</comment>
<comment type="subcellular location">
    <subcellularLocation>
        <location evidence="1">Cytoplasm</location>
    </subcellularLocation>
</comment>
<comment type="similarity">
    <text evidence="1">Belongs to the thioester dehydratase family. FabZ subfamily.</text>
</comment>
<accession>A3NAT6</accession>
<feature type="chain" id="PRO_1000049838" description="3-hydroxyacyl-[acyl-carrier-protein] dehydratase FabZ">
    <location>
        <begin position="1"/>
        <end position="155"/>
    </location>
</feature>
<feature type="active site" evidence="1">
    <location>
        <position position="54"/>
    </location>
</feature>
<sequence length="155" mass="17412">MSTEKINFDIHKILTLLPHRYPILLVDRVLELEPHKAIKALKNVTVNEPFFTGHFPKRPVMPGVLIIEALAQAAALLTFAEAQPKDPENTLYYFVGIDNARFKRVVEPGDQLILNVTFERYIRGIWKFKAVAEVDGKVAAEAELMCTVKTADAAP</sequence>
<evidence type="ECO:0000255" key="1">
    <source>
        <dbReference type="HAMAP-Rule" id="MF_00406"/>
    </source>
</evidence>
<proteinExistence type="inferred from homology"/>
<organism>
    <name type="scientific">Burkholderia pseudomallei (strain 668)</name>
    <dbReference type="NCBI Taxonomy" id="320373"/>
    <lineage>
        <taxon>Bacteria</taxon>
        <taxon>Pseudomonadati</taxon>
        <taxon>Pseudomonadota</taxon>
        <taxon>Betaproteobacteria</taxon>
        <taxon>Burkholderiales</taxon>
        <taxon>Burkholderiaceae</taxon>
        <taxon>Burkholderia</taxon>
        <taxon>pseudomallei group</taxon>
    </lineage>
</organism>
<dbReference type="EC" id="4.2.1.59" evidence="1"/>
<dbReference type="EMBL" id="CP000570">
    <property type="protein sequence ID" value="ABN85298.1"/>
    <property type="molecule type" value="Genomic_DNA"/>
</dbReference>
<dbReference type="RefSeq" id="WP_004192266.1">
    <property type="nucleotide sequence ID" value="NC_009074.1"/>
</dbReference>
<dbReference type="SMR" id="A3NAT6"/>
<dbReference type="GeneID" id="93060689"/>
<dbReference type="KEGG" id="bpd:BURPS668_2425"/>
<dbReference type="HOGENOM" id="CLU_078912_1_0_4"/>
<dbReference type="GO" id="GO:0005737">
    <property type="term" value="C:cytoplasm"/>
    <property type="evidence" value="ECO:0007669"/>
    <property type="project" value="UniProtKB-SubCell"/>
</dbReference>
<dbReference type="GO" id="GO:0016020">
    <property type="term" value="C:membrane"/>
    <property type="evidence" value="ECO:0007669"/>
    <property type="project" value="GOC"/>
</dbReference>
<dbReference type="GO" id="GO:0019171">
    <property type="term" value="F:(3R)-hydroxyacyl-[acyl-carrier-protein] dehydratase activity"/>
    <property type="evidence" value="ECO:0007669"/>
    <property type="project" value="UniProtKB-EC"/>
</dbReference>
<dbReference type="GO" id="GO:0006633">
    <property type="term" value="P:fatty acid biosynthetic process"/>
    <property type="evidence" value="ECO:0007669"/>
    <property type="project" value="UniProtKB-UniRule"/>
</dbReference>
<dbReference type="GO" id="GO:0009245">
    <property type="term" value="P:lipid A biosynthetic process"/>
    <property type="evidence" value="ECO:0007669"/>
    <property type="project" value="UniProtKB-UniRule"/>
</dbReference>
<dbReference type="CDD" id="cd01288">
    <property type="entry name" value="FabZ"/>
    <property type="match status" value="1"/>
</dbReference>
<dbReference type="FunFam" id="3.10.129.10:FF:000001">
    <property type="entry name" value="3-hydroxyacyl-[acyl-carrier-protein] dehydratase FabZ"/>
    <property type="match status" value="1"/>
</dbReference>
<dbReference type="Gene3D" id="3.10.129.10">
    <property type="entry name" value="Hotdog Thioesterase"/>
    <property type="match status" value="1"/>
</dbReference>
<dbReference type="HAMAP" id="MF_00406">
    <property type="entry name" value="FabZ"/>
    <property type="match status" value="1"/>
</dbReference>
<dbReference type="InterPro" id="IPR013114">
    <property type="entry name" value="FabA_FabZ"/>
</dbReference>
<dbReference type="InterPro" id="IPR010084">
    <property type="entry name" value="FabZ"/>
</dbReference>
<dbReference type="InterPro" id="IPR029069">
    <property type="entry name" value="HotDog_dom_sf"/>
</dbReference>
<dbReference type="NCBIfam" id="TIGR01750">
    <property type="entry name" value="fabZ"/>
    <property type="match status" value="1"/>
</dbReference>
<dbReference type="NCBIfam" id="NF000582">
    <property type="entry name" value="PRK00006.1"/>
    <property type="match status" value="1"/>
</dbReference>
<dbReference type="PANTHER" id="PTHR30272">
    <property type="entry name" value="3-HYDROXYACYL-[ACYL-CARRIER-PROTEIN] DEHYDRATASE"/>
    <property type="match status" value="1"/>
</dbReference>
<dbReference type="PANTHER" id="PTHR30272:SF1">
    <property type="entry name" value="3-HYDROXYACYL-[ACYL-CARRIER-PROTEIN] DEHYDRATASE"/>
    <property type="match status" value="1"/>
</dbReference>
<dbReference type="Pfam" id="PF07977">
    <property type="entry name" value="FabA"/>
    <property type="match status" value="1"/>
</dbReference>
<dbReference type="SUPFAM" id="SSF54637">
    <property type="entry name" value="Thioesterase/thiol ester dehydrase-isomerase"/>
    <property type="match status" value="1"/>
</dbReference>